<evidence type="ECO:0000250" key="1"/>
<evidence type="ECO:0000250" key="2">
    <source>
        <dbReference type="UniProtKB" id="Q9CWD3"/>
    </source>
</evidence>
<evidence type="ECO:0000255" key="3">
    <source>
        <dbReference type="PROSITE-ProRule" id="PRU00794"/>
    </source>
</evidence>
<evidence type="ECO:0000305" key="4"/>
<proteinExistence type="evidence at transcript level"/>
<dbReference type="EC" id="3.6.1.62" evidence="2"/>
<dbReference type="EMBL" id="BC097186">
    <property type="protein sequence ID" value="AAH97186.1"/>
    <property type="molecule type" value="mRNA"/>
</dbReference>
<dbReference type="RefSeq" id="NP_001025274.1">
    <property type="nucleotide sequence ID" value="NM_001030103.1"/>
</dbReference>
<dbReference type="SMR" id="Q4V8V2"/>
<dbReference type="FunCoup" id="Q4V8V2">
    <property type="interactions" value="89"/>
</dbReference>
<dbReference type="STRING" id="7955.ENSDARP00000006375"/>
<dbReference type="PaxDb" id="7955-ENSDARP00000006375"/>
<dbReference type="GeneID" id="556651"/>
<dbReference type="KEGG" id="dre:556651"/>
<dbReference type="AGR" id="ZFIN:ZDB-GENE-050913-50"/>
<dbReference type="CTD" id="200035"/>
<dbReference type="ZFIN" id="ZDB-GENE-050913-50">
    <property type="gene designation" value="nudt17"/>
</dbReference>
<dbReference type="eggNOG" id="ENOG502QWT5">
    <property type="taxonomic scope" value="Eukaryota"/>
</dbReference>
<dbReference type="InParanoid" id="Q4V8V2"/>
<dbReference type="OrthoDB" id="447842at2759"/>
<dbReference type="PhylomeDB" id="Q4V8V2"/>
<dbReference type="PRO" id="PR:Q4V8V2"/>
<dbReference type="Proteomes" id="UP000000437">
    <property type="component" value="Chromosome 16"/>
</dbReference>
<dbReference type="GO" id="GO:0005777">
    <property type="term" value="C:peroxisome"/>
    <property type="evidence" value="ECO:0000318"/>
    <property type="project" value="GO_Central"/>
</dbReference>
<dbReference type="GO" id="GO:0046872">
    <property type="term" value="F:metal ion binding"/>
    <property type="evidence" value="ECO:0007669"/>
    <property type="project" value="UniProtKB-KW"/>
</dbReference>
<dbReference type="GO" id="GO:0035529">
    <property type="term" value="F:NADH pyrophosphatase activity"/>
    <property type="evidence" value="ECO:0000318"/>
    <property type="project" value="GO_Central"/>
</dbReference>
<dbReference type="GO" id="GO:0019677">
    <property type="term" value="P:NAD catabolic process"/>
    <property type="evidence" value="ECO:0000318"/>
    <property type="project" value="GO_Central"/>
</dbReference>
<dbReference type="GO" id="GO:0006734">
    <property type="term" value="P:NADH metabolic process"/>
    <property type="evidence" value="ECO:0000318"/>
    <property type="project" value="GO_Central"/>
</dbReference>
<dbReference type="GO" id="GO:0006742">
    <property type="term" value="P:NADP catabolic process"/>
    <property type="evidence" value="ECO:0000318"/>
    <property type="project" value="GO_Central"/>
</dbReference>
<dbReference type="CDD" id="cd04694">
    <property type="entry name" value="NUDIX_Nudt17"/>
    <property type="match status" value="1"/>
</dbReference>
<dbReference type="FunFam" id="3.90.79.10:FF:000033">
    <property type="entry name" value="nucleoside diphosphate-linked moiety X motif 17 isoform X1"/>
    <property type="match status" value="1"/>
</dbReference>
<dbReference type="Gene3D" id="3.90.79.10">
    <property type="entry name" value="Nucleoside Triphosphate Pyrophosphohydrolase"/>
    <property type="match status" value="1"/>
</dbReference>
<dbReference type="InterPro" id="IPR050241">
    <property type="entry name" value="NAD-cap_RNA_hydrolase_NudC"/>
</dbReference>
<dbReference type="InterPro" id="IPR015797">
    <property type="entry name" value="NUDIX_hydrolase-like_dom_sf"/>
</dbReference>
<dbReference type="InterPro" id="IPR000086">
    <property type="entry name" value="NUDIX_hydrolase_dom"/>
</dbReference>
<dbReference type="InterPro" id="IPR033716">
    <property type="entry name" value="Nudt17_dom"/>
</dbReference>
<dbReference type="PANTHER" id="PTHR42904:SF1">
    <property type="entry name" value="NUCLEOSIDE DIPHOSPHATE-LINKED MOIETY X MOTIF 17"/>
    <property type="match status" value="1"/>
</dbReference>
<dbReference type="PANTHER" id="PTHR42904">
    <property type="entry name" value="NUDIX HYDROLASE, NUDC SUBFAMILY"/>
    <property type="match status" value="1"/>
</dbReference>
<dbReference type="Pfam" id="PF00293">
    <property type="entry name" value="NUDIX"/>
    <property type="match status" value="1"/>
</dbReference>
<dbReference type="SUPFAM" id="SSF55811">
    <property type="entry name" value="Nudix"/>
    <property type="match status" value="1"/>
</dbReference>
<dbReference type="PROSITE" id="PS51462">
    <property type="entry name" value="NUDIX"/>
    <property type="match status" value="1"/>
</dbReference>
<accession>Q4V8V2</accession>
<organism>
    <name type="scientific">Danio rerio</name>
    <name type="common">Zebrafish</name>
    <name type="synonym">Brachydanio rerio</name>
    <dbReference type="NCBI Taxonomy" id="7955"/>
    <lineage>
        <taxon>Eukaryota</taxon>
        <taxon>Metazoa</taxon>
        <taxon>Chordata</taxon>
        <taxon>Craniata</taxon>
        <taxon>Vertebrata</taxon>
        <taxon>Euteleostomi</taxon>
        <taxon>Actinopterygii</taxon>
        <taxon>Neopterygii</taxon>
        <taxon>Teleostei</taxon>
        <taxon>Ostariophysi</taxon>
        <taxon>Cypriniformes</taxon>
        <taxon>Danionidae</taxon>
        <taxon>Danioninae</taxon>
        <taxon>Danio</taxon>
    </lineage>
</organism>
<reference key="1">
    <citation type="submission" date="2005-06" db="EMBL/GenBank/DDBJ databases">
        <authorList>
            <consortium name="NIH - Zebrafish Gene Collection (ZGC) project"/>
        </authorList>
    </citation>
    <scope>NUCLEOTIDE SEQUENCE [LARGE SCALE MRNA]</scope>
    <source>
        <tissue>Embryo</tissue>
    </source>
</reference>
<feature type="chain" id="PRO_0000380517" description="m7GpppN-mRNA hydrolase NUDT17">
    <location>
        <begin position="1"/>
        <end position="300"/>
    </location>
</feature>
<feature type="domain" description="Nudix hydrolase" evidence="3">
    <location>
        <begin position="88"/>
        <end position="239"/>
    </location>
</feature>
<feature type="short sequence motif" description="Nudix box">
    <location>
        <begin position="127"/>
        <end position="148"/>
    </location>
</feature>
<feature type="binding site" evidence="1">
    <location>
        <position position="142"/>
    </location>
    <ligand>
        <name>Mg(2+)</name>
        <dbReference type="ChEBI" id="CHEBI:18420"/>
    </ligand>
</feature>
<feature type="binding site" evidence="1">
    <location>
        <position position="146"/>
    </location>
    <ligand>
        <name>Mg(2+)</name>
        <dbReference type="ChEBI" id="CHEBI:18420"/>
    </ligand>
</feature>
<name>NUD17_DANRE</name>
<gene>
    <name type="primary">nudt17</name>
    <name type="ORF">zgc:114128</name>
</gene>
<sequence length="300" mass="32712">MEKVRRILVHLSKENAAPQCARFLQSITGHFVGSAEDQATVSCSLENNRFILGDRLCDGGVPLKRASFCPIKYLSDSEAVSLPSETLSRGVDVGVAVLLQSANQKLLLTRRASSLRSFPNVWVPPGGHVELDEKLLDAGLRELLEETGLNLSPDEICSRLLGLWESVYPPMLTIGLPKRHHIVTYILLKSSQTHLQIQASLRPDPAEVSACVWVDADLVKAVVSAVDGEKECVQIPADLPESIGVTKVSPDGEMSESSLPVSVLCNRAPDYGEDIERVSTGTKFALELWLKTLEHHADMG</sequence>
<keyword id="KW-0378">Hydrolase</keyword>
<keyword id="KW-0460">Magnesium</keyword>
<keyword id="KW-0464">Manganese</keyword>
<keyword id="KW-0479">Metal-binding</keyword>
<keyword id="KW-1185">Reference proteome</keyword>
<comment type="function">
    <text evidence="2">Acts as a decapping enzyme capable of hydrolyzing monomethylated capped RNAs (in vitro). Hydrolyzes monomethylated capped RNA after alpha and beta phosphates to form N(7)-methyl-GDP. Shows low activity towards unmethylated capped RNA.</text>
</comment>
<comment type="catalytic activity">
    <reaction evidence="2">
        <text>a 5'-end (N(7)-methyl 5'-triphosphoguanosine)-ribonucleoside in mRNA + H2O = N(7)-methyl-GDP + a 5'-end phospho-ribonucleoside in mRNA + 2 H(+)</text>
        <dbReference type="Rhea" id="RHEA:67484"/>
        <dbReference type="Rhea" id="RHEA-COMP:15692"/>
        <dbReference type="Rhea" id="RHEA-COMP:17167"/>
        <dbReference type="ChEBI" id="CHEBI:15377"/>
        <dbReference type="ChEBI" id="CHEBI:15378"/>
        <dbReference type="ChEBI" id="CHEBI:63714"/>
        <dbReference type="ChEBI" id="CHEBI:138282"/>
        <dbReference type="ChEBI" id="CHEBI:156461"/>
        <dbReference type="EC" id="3.6.1.62"/>
    </reaction>
</comment>
<comment type="cofactor">
    <cofactor evidence="1">
        <name>Mg(2+)</name>
        <dbReference type="ChEBI" id="CHEBI:18420"/>
    </cofactor>
    <cofactor evidence="1">
        <name>Mn(2+)</name>
        <dbReference type="ChEBI" id="CHEBI:29035"/>
    </cofactor>
</comment>
<comment type="similarity">
    <text evidence="4">Belongs to the Nudix hydrolase family.</text>
</comment>
<protein>
    <recommendedName>
        <fullName>m7GpppN-mRNA hydrolase NUDT17</fullName>
        <ecNumber evidence="2">3.6.1.62</ecNumber>
    </recommendedName>
    <alternativeName>
        <fullName>Nucleoside diphosphate-linked moiety X motif 17</fullName>
        <shortName>Nudix motif 17</shortName>
    </alternativeName>
</protein>